<sequence length="81" mass="9260">MSELFSTPDHTLDALGLRCPEPVMMVRKTVRTMPVGETLLIIADDPATTRDIPGFCRFMEHELVAQETEALPYRYLIRKSH</sequence>
<proteinExistence type="inferred from homology"/>
<evidence type="ECO:0000255" key="1">
    <source>
        <dbReference type="HAMAP-Rule" id="MF_00413"/>
    </source>
</evidence>
<feature type="chain" id="PRO_1000050017" description="Sulfur carrier protein TusA">
    <location>
        <begin position="1"/>
        <end position="81"/>
    </location>
</feature>
<feature type="active site" description="Cysteine persulfide intermediate" evidence="1">
    <location>
        <position position="19"/>
    </location>
</feature>
<keyword id="KW-0963">Cytoplasm</keyword>
<keyword id="KW-0819">tRNA processing</keyword>
<dbReference type="EMBL" id="CP000647">
    <property type="protein sequence ID" value="ABR79223.1"/>
    <property type="molecule type" value="Genomic_DNA"/>
</dbReference>
<dbReference type="RefSeq" id="WP_002920858.1">
    <property type="nucleotide sequence ID" value="NC_009648.1"/>
</dbReference>
<dbReference type="SMR" id="A6TF89"/>
<dbReference type="STRING" id="272620.KPN_03836"/>
<dbReference type="PaxDb" id="272620-KPN_03836"/>
<dbReference type="EnsemblBacteria" id="ABR79223">
    <property type="protein sequence ID" value="ABR79223"/>
    <property type="gene ID" value="KPN_03836"/>
</dbReference>
<dbReference type="GeneID" id="93270850"/>
<dbReference type="KEGG" id="kpn:KPN_03836"/>
<dbReference type="HOGENOM" id="CLU_165255_5_0_6"/>
<dbReference type="Proteomes" id="UP000000265">
    <property type="component" value="Chromosome"/>
</dbReference>
<dbReference type="GO" id="GO:0005737">
    <property type="term" value="C:cytoplasm"/>
    <property type="evidence" value="ECO:0007669"/>
    <property type="project" value="UniProtKB-SubCell"/>
</dbReference>
<dbReference type="GO" id="GO:0097163">
    <property type="term" value="F:sulfur carrier activity"/>
    <property type="evidence" value="ECO:0007669"/>
    <property type="project" value="UniProtKB-UniRule"/>
</dbReference>
<dbReference type="GO" id="GO:0002143">
    <property type="term" value="P:tRNA wobble position uridine thiolation"/>
    <property type="evidence" value="ECO:0007669"/>
    <property type="project" value="InterPro"/>
</dbReference>
<dbReference type="CDD" id="cd03423">
    <property type="entry name" value="SirA"/>
    <property type="match status" value="1"/>
</dbReference>
<dbReference type="Gene3D" id="3.30.110.40">
    <property type="entry name" value="TusA-like domain"/>
    <property type="match status" value="1"/>
</dbReference>
<dbReference type="HAMAP" id="MF_00413">
    <property type="entry name" value="Thiourid_synth_A"/>
    <property type="match status" value="1"/>
</dbReference>
<dbReference type="InterPro" id="IPR022931">
    <property type="entry name" value="Sulphur_carrier_TusA"/>
</dbReference>
<dbReference type="InterPro" id="IPR001455">
    <property type="entry name" value="TusA-like"/>
</dbReference>
<dbReference type="InterPro" id="IPR036868">
    <property type="entry name" value="TusA-like_sf"/>
</dbReference>
<dbReference type="NCBIfam" id="NF001423">
    <property type="entry name" value="PRK00299.1"/>
    <property type="match status" value="1"/>
</dbReference>
<dbReference type="PANTHER" id="PTHR33279:SF2">
    <property type="entry name" value="SULFUR CARRIER PROTEIN TUSA"/>
    <property type="match status" value="1"/>
</dbReference>
<dbReference type="PANTHER" id="PTHR33279">
    <property type="entry name" value="SULFUR CARRIER PROTEIN YEDF-RELATED"/>
    <property type="match status" value="1"/>
</dbReference>
<dbReference type="Pfam" id="PF01206">
    <property type="entry name" value="TusA"/>
    <property type="match status" value="1"/>
</dbReference>
<dbReference type="SUPFAM" id="SSF64307">
    <property type="entry name" value="SirA-like"/>
    <property type="match status" value="1"/>
</dbReference>
<dbReference type="PROSITE" id="PS01148">
    <property type="entry name" value="UPF0033"/>
    <property type="match status" value="1"/>
</dbReference>
<name>TUSA_KLEP7</name>
<reference key="1">
    <citation type="submission" date="2006-09" db="EMBL/GenBank/DDBJ databases">
        <authorList>
            <consortium name="The Klebsiella pneumonia Genome Sequencing Project"/>
            <person name="McClelland M."/>
            <person name="Sanderson E.K."/>
            <person name="Spieth J."/>
            <person name="Clifton W.S."/>
            <person name="Latreille P."/>
            <person name="Sabo A."/>
            <person name="Pepin K."/>
            <person name="Bhonagiri V."/>
            <person name="Porwollik S."/>
            <person name="Ali J."/>
            <person name="Wilson R.K."/>
        </authorList>
    </citation>
    <scope>NUCLEOTIDE SEQUENCE [LARGE SCALE GENOMIC DNA]</scope>
    <source>
        <strain>ATCC 700721 / MGH 78578</strain>
    </source>
</reference>
<gene>
    <name evidence="1" type="primary">tusA</name>
    <name type="ordered locus">KPN78578_37990</name>
    <name type="ORF">KPN_03836</name>
</gene>
<comment type="function">
    <text evidence="1">Sulfur carrier protein involved in sulfur trafficking in the cell. Part of a sulfur-relay system required for 2-thiolation during synthesis of 2-thiouridine of the modified wobble base 5-methylaminomethyl-2-thiouridine (mnm(5)s(2)U) in tRNA. Interacts with IscS and stimulates its cysteine desulfurase activity. Accepts an activated sulfur from IscS, which is then transferred to TusD, and thus determines the direction of sulfur flow from IscS to 2-thiouridine formation. Also appears to be involved in sulfur transfer for the biosynthesis of molybdopterin.</text>
</comment>
<comment type="pathway">
    <text evidence="1">tRNA modification.</text>
</comment>
<comment type="subunit">
    <text evidence="1">Interacts with IscS.</text>
</comment>
<comment type="subcellular location">
    <subcellularLocation>
        <location evidence="1">Cytoplasm</location>
    </subcellularLocation>
</comment>
<comment type="similarity">
    <text evidence="1">Belongs to the sulfur carrier protein TusA family.</text>
</comment>
<protein>
    <recommendedName>
        <fullName evidence="1">Sulfur carrier protein TusA</fullName>
    </recommendedName>
    <alternativeName>
        <fullName evidence="1">Sulfur mediator TusA</fullName>
    </alternativeName>
    <alternativeName>
        <fullName evidence="1">Sulfur transfer protein TusA</fullName>
    </alternativeName>
    <alternativeName>
        <fullName evidence="1">tRNA 2-thiouridine synthesizing protein A</fullName>
    </alternativeName>
</protein>
<accession>A6TF89</accession>
<organism>
    <name type="scientific">Klebsiella pneumoniae subsp. pneumoniae (strain ATCC 700721 / MGH 78578)</name>
    <dbReference type="NCBI Taxonomy" id="272620"/>
    <lineage>
        <taxon>Bacteria</taxon>
        <taxon>Pseudomonadati</taxon>
        <taxon>Pseudomonadota</taxon>
        <taxon>Gammaproteobacteria</taxon>
        <taxon>Enterobacterales</taxon>
        <taxon>Enterobacteriaceae</taxon>
        <taxon>Klebsiella/Raoultella group</taxon>
        <taxon>Klebsiella</taxon>
        <taxon>Klebsiella pneumoniae complex</taxon>
    </lineage>
</organism>